<organism>
    <name type="scientific">Macaca fascicularis</name>
    <name type="common">Crab-eating macaque</name>
    <name type="synonym">Cynomolgus monkey</name>
    <dbReference type="NCBI Taxonomy" id="9541"/>
    <lineage>
        <taxon>Eukaryota</taxon>
        <taxon>Metazoa</taxon>
        <taxon>Chordata</taxon>
        <taxon>Craniata</taxon>
        <taxon>Vertebrata</taxon>
        <taxon>Euteleostomi</taxon>
        <taxon>Mammalia</taxon>
        <taxon>Eutheria</taxon>
        <taxon>Euarchontoglires</taxon>
        <taxon>Primates</taxon>
        <taxon>Haplorrhini</taxon>
        <taxon>Catarrhini</taxon>
        <taxon>Cercopithecidae</taxon>
        <taxon>Cercopithecinae</taxon>
        <taxon>Macaca</taxon>
    </lineage>
</organism>
<proteinExistence type="evidence at transcript level"/>
<accession>Q4JK73</accession>
<keyword id="KW-0256">Endoplasmic reticulum</keyword>
<keyword id="KW-0444">Lipid biosynthesis</keyword>
<keyword id="KW-0551">Lipid droplet</keyword>
<keyword id="KW-0443">Lipid metabolism</keyword>
<keyword id="KW-0521">NADP</keyword>
<keyword id="KW-0560">Oxidoreductase</keyword>
<keyword id="KW-1185">Reference proteome</keyword>
<keyword id="KW-0732">Signal</keyword>
<keyword id="KW-0752">Steroid biosynthesis</keyword>
<protein>
    <recommendedName>
        <fullName>Estradiol 17-beta-dehydrogenase 11</fullName>
        <ecNumber>1.1.1.62</ecNumber>
    </recommendedName>
    <alternativeName>
        <fullName>17-beta-hydroxysteroid dehydrogenase 11</fullName>
        <shortName>17-beta-HSD 11</shortName>
        <shortName>17bHSD11</shortName>
        <shortName>17betaHSD11</shortName>
    </alternativeName>
    <alternativeName>
        <fullName>17-beta-hydroxysteroid dehydrogenase XI</fullName>
        <shortName>17-beta-HSD XI</shortName>
        <shortName>17betaHSDXI</shortName>
    </alternativeName>
    <alternativeName>
        <fullName>Dehydrogenase/reductase SDR family member 8</fullName>
    </alternativeName>
</protein>
<feature type="signal peptide" evidence="3">
    <location>
        <begin position="1"/>
        <end position="18"/>
    </location>
</feature>
<feature type="chain" id="PRO_0000042582" description="Estradiol 17-beta-dehydrogenase 11">
    <location>
        <begin position="19"/>
        <end position="300"/>
    </location>
</feature>
<feature type="active site" description="Proton acceptor" evidence="1">
    <location>
        <position position="185"/>
    </location>
</feature>
<feature type="binding site" evidence="1">
    <location>
        <begin position="40"/>
        <end position="67"/>
    </location>
    <ligand>
        <name>NADP(+)</name>
        <dbReference type="ChEBI" id="CHEBI:58349"/>
    </ligand>
</feature>
<feature type="binding site" evidence="1">
    <location>
        <position position="172"/>
    </location>
    <ligand>
        <name>substrate</name>
    </ligand>
</feature>
<feature type="binding site" evidence="1">
    <location>
        <position position="189"/>
    </location>
    <ligand>
        <name>NADP(+)</name>
        <dbReference type="ChEBI" id="CHEBI:58349"/>
    </ligand>
</feature>
<evidence type="ECO:0000250" key="1"/>
<evidence type="ECO:0000250" key="2">
    <source>
        <dbReference type="UniProtKB" id="Q9EQ06"/>
    </source>
</evidence>
<evidence type="ECO:0000255" key="3"/>
<evidence type="ECO:0000305" key="4"/>
<name>DHB11_MACFA</name>
<reference key="1">
    <citation type="submission" date="2005-05" db="EMBL/GenBank/DDBJ databases">
        <authorList>
            <person name="Liu H."/>
            <person name="Labrie F."/>
            <person name="Luu-The V."/>
        </authorList>
    </citation>
    <scope>NUCLEOTIDE SEQUENCE [MRNA]</scope>
</reference>
<dbReference type="EC" id="1.1.1.62"/>
<dbReference type="EMBL" id="DQ078724">
    <property type="protein sequence ID" value="AAY84570.1"/>
    <property type="molecule type" value="mRNA"/>
</dbReference>
<dbReference type="RefSeq" id="NP_001271762.1">
    <property type="nucleotide sequence ID" value="NM_001284833.1"/>
</dbReference>
<dbReference type="SMR" id="Q4JK73"/>
<dbReference type="STRING" id="9541.ENSMFAP00000007149"/>
<dbReference type="eggNOG" id="KOG1201">
    <property type="taxonomic scope" value="Eukaryota"/>
</dbReference>
<dbReference type="Proteomes" id="UP000233100">
    <property type="component" value="Unplaced"/>
</dbReference>
<dbReference type="GO" id="GO:0005783">
    <property type="term" value="C:endoplasmic reticulum"/>
    <property type="evidence" value="ECO:0007669"/>
    <property type="project" value="UniProtKB-SubCell"/>
</dbReference>
<dbReference type="GO" id="GO:0005811">
    <property type="term" value="C:lipid droplet"/>
    <property type="evidence" value="ECO:0007669"/>
    <property type="project" value="UniProtKB-SubCell"/>
</dbReference>
<dbReference type="GO" id="GO:0004303">
    <property type="term" value="F:estradiol 17-beta-dehydrogenase [NAD(P)+] activity"/>
    <property type="evidence" value="ECO:0007669"/>
    <property type="project" value="UniProtKB-EC"/>
</dbReference>
<dbReference type="GO" id="GO:0006694">
    <property type="term" value="P:steroid biosynthetic process"/>
    <property type="evidence" value="ECO:0007669"/>
    <property type="project" value="UniProtKB-KW"/>
</dbReference>
<dbReference type="CDD" id="cd05339">
    <property type="entry name" value="17beta-HSDXI-like_SDR_c"/>
    <property type="match status" value="1"/>
</dbReference>
<dbReference type="FunFam" id="3.40.50.720:FF:000224">
    <property type="entry name" value="Hydroxysteroid 17-beta dehydrogenase 11"/>
    <property type="match status" value="1"/>
</dbReference>
<dbReference type="Gene3D" id="3.40.50.720">
    <property type="entry name" value="NAD(P)-binding Rossmann-like Domain"/>
    <property type="match status" value="1"/>
</dbReference>
<dbReference type="InterPro" id="IPR036291">
    <property type="entry name" value="NAD(P)-bd_dom_sf"/>
</dbReference>
<dbReference type="InterPro" id="IPR002347">
    <property type="entry name" value="SDR_fam"/>
</dbReference>
<dbReference type="PANTHER" id="PTHR24322:SF489">
    <property type="entry name" value="ESTRADIOL 17-BETA-DEHYDROGENASE 11"/>
    <property type="match status" value="1"/>
</dbReference>
<dbReference type="PANTHER" id="PTHR24322">
    <property type="entry name" value="PKSB"/>
    <property type="match status" value="1"/>
</dbReference>
<dbReference type="Pfam" id="PF00106">
    <property type="entry name" value="adh_short"/>
    <property type="match status" value="1"/>
</dbReference>
<dbReference type="PRINTS" id="PR00081">
    <property type="entry name" value="GDHRDH"/>
</dbReference>
<dbReference type="PRINTS" id="PR00080">
    <property type="entry name" value="SDRFAMILY"/>
</dbReference>
<dbReference type="SUPFAM" id="SSF51735">
    <property type="entry name" value="NAD(P)-binding Rossmann-fold domains"/>
    <property type="match status" value="1"/>
</dbReference>
<comment type="function">
    <text evidence="1">Can convert androstan-3-alpha,17-beta-diol (3-alpha-diol) to androsterone in vitro, suggesting that it may participate in androgen metabolism during steroidogenesis. May act by metabolizing compounds that stimulate steroid synthesis and/or by generating metabolites that inhibit it. Has no activity toward DHEA (dehydroepiandrosterone), or A-dione (4-androste-3,17-dione), and only a slight activity toward testosterone to A-dione (By similarity).</text>
</comment>
<comment type="catalytic activity">
    <reaction>
        <text>17beta-estradiol + NAD(+) = estrone + NADH + H(+)</text>
        <dbReference type="Rhea" id="RHEA:24612"/>
        <dbReference type="ChEBI" id="CHEBI:15378"/>
        <dbReference type="ChEBI" id="CHEBI:16469"/>
        <dbReference type="ChEBI" id="CHEBI:17263"/>
        <dbReference type="ChEBI" id="CHEBI:57540"/>
        <dbReference type="ChEBI" id="CHEBI:57945"/>
        <dbReference type="EC" id="1.1.1.62"/>
    </reaction>
</comment>
<comment type="catalytic activity">
    <reaction>
        <text>17beta-estradiol + NADP(+) = estrone + NADPH + H(+)</text>
        <dbReference type="Rhea" id="RHEA:24616"/>
        <dbReference type="ChEBI" id="CHEBI:15378"/>
        <dbReference type="ChEBI" id="CHEBI:16469"/>
        <dbReference type="ChEBI" id="CHEBI:17263"/>
        <dbReference type="ChEBI" id="CHEBI:57783"/>
        <dbReference type="ChEBI" id="CHEBI:58349"/>
        <dbReference type="EC" id="1.1.1.62"/>
    </reaction>
</comment>
<comment type="subcellular location">
    <subcellularLocation>
        <location evidence="2">Endoplasmic reticulum</location>
    </subcellularLocation>
    <subcellularLocation>
        <location evidence="2">Lipid droplet</location>
    </subcellularLocation>
    <text evidence="2">Redistributed from the endoplasmic reticulum to lipids droplets in the cell upon induction of lipids droplet formation.</text>
</comment>
<comment type="similarity">
    <text evidence="4">Belongs to the short-chain dehydrogenases/reductases (SDR) family. 17-beta-HSD 3 subfamily.</text>
</comment>
<gene>
    <name type="primary">HSD17B11</name>
    <name type="synonym">DHRS8</name>
</gene>
<sequence length="300" mass="32920">MKILLDLLLLLPLLIVCCLESFVKLFIPKRRKSVAGEIVLITGAGHGIGRLTAYEFAKLKSKLVLWDINKHGLEETAAKCKGLGAKVYTFVVDCSNREDIYSSAKKVKAEIGDVSILVNNAGVVYTSDLFATQDAQIEKTFEVNILAHFWTTKAFLPAMMKNNHGHVVTVASAAGHISVPFLLAYCSSKFSAVGFHKALTDELAALQITGVKTTCLCPNFVNTGFIKNPSTSLGPALEPEEVVNRLMNGILTEQKMIFSPSSIAFLTILERILPERFLAVLKRKINIKFDAVIGYKMKAQ</sequence>